<protein>
    <recommendedName>
        <fullName evidence="1">Sugar fermentation stimulation protein homolog</fullName>
    </recommendedName>
</protein>
<accession>B5Y1P0</accession>
<organism>
    <name type="scientific">Klebsiella pneumoniae (strain 342)</name>
    <dbReference type="NCBI Taxonomy" id="507522"/>
    <lineage>
        <taxon>Bacteria</taxon>
        <taxon>Pseudomonadati</taxon>
        <taxon>Pseudomonadota</taxon>
        <taxon>Gammaproteobacteria</taxon>
        <taxon>Enterobacterales</taxon>
        <taxon>Enterobacteriaceae</taxon>
        <taxon>Klebsiella/Raoultella group</taxon>
        <taxon>Klebsiella</taxon>
        <taxon>Klebsiella pneumoniae complex</taxon>
    </lineage>
</organism>
<dbReference type="EMBL" id="CP000964">
    <property type="protein sequence ID" value="ACI07912.1"/>
    <property type="molecule type" value="Genomic_DNA"/>
</dbReference>
<dbReference type="SMR" id="B5Y1P0"/>
<dbReference type="KEGG" id="kpe:KPK_4590"/>
<dbReference type="HOGENOM" id="CLU_052299_2_0_6"/>
<dbReference type="Proteomes" id="UP000001734">
    <property type="component" value="Chromosome"/>
</dbReference>
<dbReference type="GO" id="GO:0003677">
    <property type="term" value="F:DNA binding"/>
    <property type="evidence" value="ECO:0007669"/>
    <property type="project" value="InterPro"/>
</dbReference>
<dbReference type="CDD" id="cd22359">
    <property type="entry name" value="SfsA-like_bacterial"/>
    <property type="match status" value="1"/>
</dbReference>
<dbReference type="FunFam" id="2.40.50.580:FF:000001">
    <property type="entry name" value="Sugar fermentation stimulation protein A"/>
    <property type="match status" value="1"/>
</dbReference>
<dbReference type="FunFam" id="3.40.1350.60:FF:000001">
    <property type="entry name" value="Sugar fermentation stimulation protein A"/>
    <property type="match status" value="1"/>
</dbReference>
<dbReference type="Gene3D" id="2.40.50.580">
    <property type="match status" value="1"/>
</dbReference>
<dbReference type="Gene3D" id="3.40.1350.60">
    <property type="match status" value="1"/>
</dbReference>
<dbReference type="HAMAP" id="MF_00095">
    <property type="entry name" value="SfsA"/>
    <property type="match status" value="1"/>
</dbReference>
<dbReference type="InterPro" id="IPR005224">
    <property type="entry name" value="SfsA"/>
</dbReference>
<dbReference type="InterPro" id="IPR040452">
    <property type="entry name" value="SfsA_C"/>
</dbReference>
<dbReference type="InterPro" id="IPR041465">
    <property type="entry name" value="SfsA_N"/>
</dbReference>
<dbReference type="NCBIfam" id="TIGR00230">
    <property type="entry name" value="sfsA"/>
    <property type="match status" value="1"/>
</dbReference>
<dbReference type="PANTHER" id="PTHR30545">
    <property type="entry name" value="SUGAR FERMENTATION STIMULATION PROTEIN A"/>
    <property type="match status" value="1"/>
</dbReference>
<dbReference type="PANTHER" id="PTHR30545:SF2">
    <property type="entry name" value="SUGAR FERMENTATION STIMULATION PROTEIN A"/>
    <property type="match status" value="1"/>
</dbReference>
<dbReference type="Pfam" id="PF03749">
    <property type="entry name" value="SfsA"/>
    <property type="match status" value="1"/>
</dbReference>
<dbReference type="Pfam" id="PF17746">
    <property type="entry name" value="SfsA_N"/>
    <property type="match status" value="1"/>
</dbReference>
<feature type="chain" id="PRO_1000093574" description="Sugar fermentation stimulation protein homolog">
    <location>
        <begin position="1"/>
        <end position="238"/>
    </location>
</feature>
<evidence type="ECO:0000255" key="1">
    <source>
        <dbReference type="HAMAP-Rule" id="MF_00095"/>
    </source>
</evidence>
<proteinExistence type="inferred from homology"/>
<gene>
    <name evidence="1" type="primary">sfsA</name>
    <name type="ordered locus">KPK_4590</name>
</gene>
<name>SFSA_KLEP3</name>
<reference key="1">
    <citation type="journal article" date="2008" name="PLoS Genet.">
        <title>Complete genome sequence of the N2-fixing broad host range endophyte Klebsiella pneumoniae 342 and virulence predictions verified in mice.</title>
        <authorList>
            <person name="Fouts D.E."/>
            <person name="Tyler H.L."/>
            <person name="DeBoy R.T."/>
            <person name="Daugherty S."/>
            <person name="Ren Q."/>
            <person name="Badger J.H."/>
            <person name="Durkin A.S."/>
            <person name="Huot H."/>
            <person name="Shrivastava S."/>
            <person name="Kothari S."/>
            <person name="Dodson R.J."/>
            <person name="Mohamoud Y."/>
            <person name="Khouri H."/>
            <person name="Roesch L.F.W."/>
            <person name="Krogfelt K.A."/>
            <person name="Struve C."/>
            <person name="Triplett E.W."/>
            <person name="Methe B.A."/>
        </authorList>
    </citation>
    <scope>NUCLEOTIDE SEQUENCE [LARGE SCALE GENOMIC DNA]</scope>
    <source>
        <strain>342</strain>
    </source>
</reference>
<sequence>MQFDPPLQPAILLKRYKRFLADVITPDGRELTLHCPNTGAMTGCAAPGDTVWYSTSDNAKRKYAHTWELTETQQGAVICVNTLRANSLAKEAISSGIIPELSGYNQLKSEVKYGEENSRIDIMLQADDRQNCYIEVKSVTLAEKEYGYFPDAVTTRGQKHLRELMAVAANGDRAVILFAVLHSAIDRFSPAHHIDARYAQLLTEARDKGVEILAWKAELSTTKMTLNKPIAVVLNPGK</sequence>
<comment type="similarity">
    <text evidence="1">Belongs to the SfsA family.</text>
</comment>